<sequence>MAKTDLARRVYNHTWKLDPIIRSLLDTDFYKLLMLQMIWGLYPRVDATFSLINRTSSVRLADEIDEGELRAQLDHARTLRFSKKEMIWLAGNTFYGRKQIFQPEFLAWLHDFQLPEYELRRKDGQYELHFHGPWTHTTMWEIPALAIINELRSRAAMKNLGPFSLDVLYARAKAKMWSKVERLRQLPDLKISDFGTRRRHSFLWQRWCVEALKEGIGSAFTGTSNVLLAMDTDLEALGTNAHELPMVLAALAKTDDELRSAPYRVLQDWNRYYGGNLLIVLPDAFGTAAFLRNAPDWVADWTGFRPDSAPPIEGGERIIEWWKSKGKDPREKLLIFSDALDVDTIEETYRHFEGRVRMGFGWGTNLTNDFAGCAPQSIDGLKAISLVCKVTDANGHPAVKLSDNPQKATGDPKEVARYLRFFGNEERVEQLVRV</sequence>
<protein>
    <recommendedName>
        <fullName evidence="1">Nicotinate phosphoribosyltransferase</fullName>
        <shortName evidence="1">NAPRTase</shortName>
        <ecNumber evidence="1">6.3.4.21</ecNumber>
    </recommendedName>
</protein>
<evidence type="ECO:0000255" key="1">
    <source>
        <dbReference type="HAMAP-Rule" id="MF_00570"/>
    </source>
</evidence>
<accession>Q57FQ9</accession>
<feature type="chain" id="PRO_1000024996" description="Nicotinate phosphoribosyltransferase">
    <location>
        <begin position="1"/>
        <end position="434"/>
    </location>
</feature>
<feature type="modified residue" description="Phosphohistidine; by autocatalysis" evidence="1">
    <location>
        <position position="242"/>
    </location>
</feature>
<keyword id="KW-0436">Ligase</keyword>
<keyword id="KW-0597">Phosphoprotein</keyword>
<keyword id="KW-0662">Pyridine nucleotide biosynthesis</keyword>
<proteinExistence type="inferred from homology"/>
<dbReference type="EC" id="6.3.4.21" evidence="1"/>
<dbReference type="EMBL" id="AE017223">
    <property type="protein sequence ID" value="AAX73525.1"/>
    <property type="molecule type" value="Genomic_DNA"/>
</dbReference>
<dbReference type="RefSeq" id="WP_002965361.1">
    <property type="nucleotide sequence ID" value="NC_006932.1"/>
</dbReference>
<dbReference type="SMR" id="Q57FQ9"/>
<dbReference type="EnsemblBacteria" id="AAX73525">
    <property type="protein sequence ID" value="AAX73525"/>
    <property type="gene ID" value="BruAb1_0109"/>
</dbReference>
<dbReference type="GeneID" id="97534468"/>
<dbReference type="KEGG" id="bmb:BruAb1_0109"/>
<dbReference type="HOGENOM" id="CLU_030991_1_0_5"/>
<dbReference type="UniPathway" id="UPA00253">
    <property type="reaction ID" value="UER00457"/>
</dbReference>
<dbReference type="Proteomes" id="UP000000540">
    <property type="component" value="Chromosome I"/>
</dbReference>
<dbReference type="GO" id="GO:0005829">
    <property type="term" value="C:cytosol"/>
    <property type="evidence" value="ECO:0007669"/>
    <property type="project" value="TreeGrafter"/>
</dbReference>
<dbReference type="GO" id="GO:0004516">
    <property type="term" value="F:nicotinate phosphoribosyltransferase activity"/>
    <property type="evidence" value="ECO:0007669"/>
    <property type="project" value="UniProtKB-UniRule"/>
</dbReference>
<dbReference type="GO" id="GO:0034355">
    <property type="term" value="P:NAD biosynthetic process via the salvage pathway"/>
    <property type="evidence" value="ECO:0007669"/>
    <property type="project" value="TreeGrafter"/>
</dbReference>
<dbReference type="Gene3D" id="3.20.140.10">
    <property type="entry name" value="nicotinate phosphoribosyltransferase"/>
    <property type="match status" value="1"/>
</dbReference>
<dbReference type="HAMAP" id="MF_00570">
    <property type="entry name" value="NAPRTase"/>
    <property type="match status" value="1"/>
</dbReference>
<dbReference type="InterPro" id="IPR041525">
    <property type="entry name" value="N/Namide_PRibTrfase"/>
</dbReference>
<dbReference type="InterPro" id="IPR040727">
    <property type="entry name" value="NAPRTase_N"/>
</dbReference>
<dbReference type="InterPro" id="IPR006406">
    <property type="entry name" value="Nic_PRibTrfase"/>
</dbReference>
<dbReference type="InterPro" id="IPR007229">
    <property type="entry name" value="Nic_PRibTrfase-Fam"/>
</dbReference>
<dbReference type="InterPro" id="IPR036068">
    <property type="entry name" value="Nicotinate_pribotase-like_C"/>
</dbReference>
<dbReference type="NCBIfam" id="TIGR01514">
    <property type="entry name" value="NAPRTase"/>
    <property type="match status" value="1"/>
</dbReference>
<dbReference type="NCBIfam" id="NF003704">
    <property type="entry name" value="PRK05321.1"/>
    <property type="match status" value="1"/>
</dbReference>
<dbReference type="PANTHER" id="PTHR11098">
    <property type="entry name" value="NICOTINATE PHOSPHORIBOSYLTRANSFERASE"/>
    <property type="match status" value="1"/>
</dbReference>
<dbReference type="PANTHER" id="PTHR11098:SF1">
    <property type="entry name" value="NICOTINATE PHOSPHORIBOSYLTRANSFERASE"/>
    <property type="match status" value="1"/>
</dbReference>
<dbReference type="Pfam" id="PF04095">
    <property type="entry name" value="NAPRTase"/>
    <property type="match status" value="1"/>
</dbReference>
<dbReference type="Pfam" id="PF17767">
    <property type="entry name" value="NAPRTase_N"/>
    <property type="match status" value="1"/>
</dbReference>
<dbReference type="PIRSF" id="PIRSF000484">
    <property type="entry name" value="NAPRT"/>
    <property type="match status" value="1"/>
</dbReference>
<dbReference type="SUPFAM" id="SSF51690">
    <property type="entry name" value="Nicotinate/Quinolinate PRTase C-terminal domain-like"/>
    <property type="match status" value="1"/>
</dbReference>
<dbReference type="SUPFAM" id="SSF54675">
    <property type="entry name" value="Nicotinate/Quinolinate PRTase N-terminal domain-like"/>
    <property type="match status" value="1"/>
</dbReference>
<reference key="1">
    <citation type="journal article" date="2005" name="J. Bacteriol.">
        <title>Completion of the genome sequence of Brucella abortus and comparison to the highly similar genomes of Brucella melitensis and Brucella suis.</title>
        <authorList>
            <person name="Halling S.M."/>
            <person name="Peterson-Burch B.D."/>
            <person name="Bricker B.J."/>
            <person name="Zuerner R.L."/>
            <person name="Qing Z."/>
            <person name="Li L.-L."/>
            <person name="Kapur V."/>
            <person name="Alt D.P."/>
            <person name="Olsen S.C."/>
        </authorList>
    </citation>
    <scope>NUCLEOTIDE SEQUENCE [LARGE SCALE GENOMIC DNA]</scope>
    <source>
        <strain>9-941</strain>
    </source>
</reference>
<name>PNCB_BRUAB</name>
<gene>
    <name evidence="1" type="primary">pncB</name>
    <name type="ordered locus">BruAb1_0109</name>
</gene>
<organism>
    <name type="scientific">Brucella abortus biovar 1 (strain 9-941)</name>
    <dbReference type="NCBI Taxonomy" id="262698"/>
    <lineage>
        <taxon>Bacteria</taxon>
        <taxon>Pseudomonadati</taxon>
        <taxon>Pseudomonadota</taxon>
        <taxon>Alphaproteobacteria</taxon>
        <taxon>Hyphomicrobiales</taxon>
        <taxon>Brucellaceae</taxon>
        <taxon>Brucella/Ochrobactrum group</taxon>
        <taxon>Brucella</taxon>
    </lineage>
</organism>
<comment type="function">
    <text evidence="1">Catalyzes the synthesis of beta-nicotinate D-ribonucleotide from nicotinate and 5-phospho-D-ribose 1-phosphate at the expense of ATP.</text>
</comment>
<comment type="catalytic activity">
    <reaction evidence="1">
        <text>nicotinate + 5-phospho-alpha-D-ribose 1-diphosphate + ATP + H2O = nicotinate beta-D-ribonucleotide + ADP + phosphate + diphosphate</text>
        <dbReference type="Rhea" id="RHEA:36163"/>
        <dbReference type="ChEBI" id="CHEBI:15377"/>
        <dbReference type="ChEBI" id="CHEBI:30616"/>
        <dbReference type="ChEBI" id="CHEBI:32544"/>
        <dbReference type="ChEBI" id="CHEBI:33019"/>
        <dbReference type="ChEBI" id="CHEBI:43474"/>
        <dbReference type="ChEBI" id="CHEBI:57502"/>
        <dbReference type="ChEBI" id="CHEBI:58017"/>
        <dbReference type="ChEBI" id="CHEBI:456216"/>
        <dbReference type="EC" id="6.3.4.21"/>
    </reaction>
</comment>
<comment type="pathway">
    <text evidence="1">Cofactor biosynthesis; NAD(+) biosynthesis; nicotinate D-ribonucleotide from nicotinate: step 1/1.</text>
</comment>
<comment type="PTM">
    <text evidence="1">Transiently phosphorylated on a His residue during the reaction cycle. Phosphorylation strongly increases the affinity for substrates and increases the rate of nicotinate D-ribonucleotide production. Dephosphorylation regenerates the low-affinity form of the enzyme, leading to product release.</text>
</comment>
<comment type="similarity">
    <text evidence="1">Belongs to the NAPRTase family.</text>
</comment>